<evidence type="ECO:0000250" key="1"/>
<evidence type="ECO:0000250" key="2">
    <source>
        <dbReference type="UniProtKB" id="Q15078"/>
    </source>
</evidence>
<evidence type="ECO:0000256" key="3">
    <source>
        <dbReference type="SAM" id="MobiDB-lite"/>
    </source>
</evidence>
<evidence type="ECO:0000269" key="4">
    <source>
    </source>
</evidence>
<evidence type="ECO:0000269" key="5">
    <source>
    </source>
</evidence>
<evidence type="ECO:0000269" key="6">
    <source>
    </source>
</evidence>
<evidence type="ECO:0000269" key="7">
    <source>
    </source>
</evidence>
<evidence type="ECO:0000305" key="8"/>
<gene>
    <name type="primary">Cdk5r1</name>
    <name type="synonym">Cdk5r</name>
</gene>
<organism>
    <name type="scientific">Rattus norvegicus</name>
    <name type="common">Rat</name>
    <dbReference type="NCBI Taxonomy" id="10116"/>
    <lineage>
        <taxon>Eukaryota</taxon>
        <taxon>Metazoa</taxon>
        <taxon>Chordata</taxon>
        <taxon>Craniata</taxon>
        <taxon>Vertebrata</taxon>
        <taxon>Euteleostomi</taxon>
        <taxon>Mammalia</taxon>
        <taxon>Eutheria</taxon>
        <taxon>Euarchontoglires</taxon>
        <taxon>Glires</taxon>
        <taxon>Rodentia</taxon>
        <taxon>Myomorpha</taxon>
        <taxon>Muroidea</taxon>
        <taxon>Muridae</taxon>
        <taxon>Murinae</taxon>
        <taxon>Rattus</taxon>
    </lineage>
</organism>
<protein>
    <recommendedName>
        <fullName>Cyclin-dependent kinase 5 activator 1</fullName>
        <shortName>CDK5 activator 1</shortName>
    </recommendedName>
    <alternativeName>
        <fullName>Cyclin-dependent kinase 5 regulatory subunit 1</fullName>
    </alternativeName>
    <alternativeName>
        <fullName>TPKII regulatory subunit</fullName>
    </alternativeName>
    <component>
        <recommendedName>
            <fullName>Cyclin-dependent kinase 5 activator 1, p35</fullName>
            <shortName>p35</shortName>
        </recommendedName>
    </component>
    <component>
        <recommendedName>
            <fullName>Cyclin-dependent kinase 5 activator 1, p25</fullName>
            <shortName>p25</shortName>
        </recommendedName>
        <alternativeName>
            <fullName>Tau protein kinase II 23 kDa subunit</fullName>
            <shortName>p23</shortName>
        </alternativeName>
    </component>
</protein>
<comment type="function">
    <text evidence="2">p35 is a neuron specific activator of CDK5. The complex p35/CDK5 is required for neurite outgrowth and cortical lamination. Involved in dendritic spine morphogenesis by mediating the EFNA1-EPHA4 signaling. Activator of TPKII. The complex p35/CDK5 participates in the regulation of the circadian clock by modulating the function of CLOCK protein: phosphorylates CLOCK at 'Thr-451' and 'Thr-461' and regulates the transcriptional activity of the CLOCK-BMAL1 heterodimer in association with altered stability and subcellular distribution.</text>
</comment>
<comment type="subunit">
    <text evidence="2 5 7">Heterodimer composed of a catalytic subunit CDK5 and a regulatory subunit CDK5R1 (p25) and macromolecular complex composed of at least CDK5, CDK5R1 (p35) and CDK5RAP1 or CDK5RAP2 or CDK5RAP3. Only the heterodimer shows kinase activity (By similarity). Interacts with EPHA4 and NGEF; may mediate the activation of NGEF by EPHA4 (PubMed:17143272). Interacts with RASGRF2 (PubMed:15128856). The complex p35/CDK5 interacts with CLOCK (By similarity).</text>
</comment>
<comment type="interaction">
    <interactant intactId="EBI-2008489">
        <id>P61810</id>
    </interactant>
    <interactant intactId="EBI-2008531">
        <id>Q03114</id>
        <label>Cdk5</label>
    </interactant>
    <organismsDiffer>false</organismsDiffer>
    <experiments>3</experiments>
</comment>
<comment type="interaction">
    <interactant intactId="EBI-2008489">
        <id>P61810</id>
    </interactant>
    <interactant intactId="EBI-8078743">
        <id>B1WCA1</id>
        <label>Fzr1</label>
    </interactant>
    <organismsDiffer>false</organismsDiffer>
    <experiments>3</experiments>
</comment>
<comment type="subcellular location">
    <molecule>Cyclin-dependent kinase 5 activator 1, p35</molecule>
    <subcellularLocation>
        <location evidence="2">Cell membrane</location>
        <topology evidence="2">Lipid-anchor</topology>
        <orientation evidence="2">Cytoplasmic side</orientation>
    </subcellularLocation>
    <subcellularLocation>
        <location evidence="2">Cell projection</location>
        <location evidence="2">Neuron projection</location>
    </subcellularLocation>
    <text evidence="2">In the primary cortical neurons, p35 is present in the peripheries and nerve terminals.</text>
</comment>
<comment type="subcellular location">
    <molecule>Cyclin-dependent kinase 5 activator 1, p25</molecule>
    <subcellularLocation>
        <location evidence="2">Nucleus</location>
    </subcellularLocation>
    <subcellularLocation>
        <location evidence="2">Cytoplasm</location>
        <location evidence="2">Perinuclear region</location>
    </subcellularLocation>
    <subcellularLocation>
        <location evidence="2">Perikaryon</location>
    </subcellularLocation>
    <text evidence="2">The conversion of p35 to p25 relocalizes the protein from the cell periphery to the cytoplasm, in nuclear and perinuclear regions. In the primary cortical neurons, p25 is primarily concentrated in the cell soma and is largely absent from neurites.</text>
</comment>
<comment type="tissue specificity">
    <text>Brain and neuron specific.</text>
</comment>
<comment type="PTM">
    <text evidence="4 6">The p35 form is proteolytically cleaved by calpain, giving rise to the p25 form. P35 has a 5 to 10 fold shorter half-life compared to p25. The conversion results in deregulation of the CDK5 kinase: p25/CDK5 kinase displays an increased and altered tau phosphorylation in comparison to the p35/CDK5 kinase in vivo.</text>
</comment>
<comment type="PTM">
    <text evidence="2">Myristoylated. A proper myristoylation signal is essential for the proper distribution of p35 (By similarity).</text>
</comment>
<comment type="PTM">
    <text evidence="2">Phosphorylation at Ser-8 and Thr-138 by CDK5 prevents calpain-mediated proteolysis.</text>
</comment>
<comment type="PTM">
    <text evidence="2">Ubiquitinated, leading to its degradation: degradation of p35 by proteasome results in down-regulation of CDK5 activity. During this process, CDK5 phosphorylates p35 and induces its ubiquitination and subsequent degradation. Ubiquitinated by the CRL2(FEM1B) complex, which recognizes the -Gly-Leu-Asp-Arg C-degron at the C-terminus, leading to its degradation.</text>
</comment>
<comment type="similarity">
    <text evidence="8">Belongs to the cyclin-dependent kinase 5 activator family.</text>
</comment>
<sequence>MGTVLSLSPSYRKATLFEDGAATVGHYTAVQNSKNAKDKNLKRHSIISVLPWKRIVAVSAKKKNSKKAQPNSSYQSNIAHLNNENLKKSLSCANLSTFAQPPPAQPPAPPASQLSGSQTGVSSSVKKAPHPAITSAGTPKRVIVQASTSELLRCLGEFLCRRCYRLKHLSPTDPVLWLRSVDRSLLLQGWQDQGFITPANVVFLYMLCRDVISSEVGSDHELQAVLLTCLYLSYSYMGNEISYPLKPFLVESCKEAFWDRCLSVINLMSSKMLQINADPHYFTQVFSDLKNESGQEDKKRLLLGLDR</sequence>
<keyword id="KW-0090">Biological rhythms</keyword>
<keyword id="KW-1003">Cell membrane</keyword>
<keyword id="KW-0966">Cell projection</keyword>
<keyword id="KW-0963">Cytoplasm</keyword>
<keyword id="KW-0449">Lipoprotein</keyword>
<keyword id="KW-0472">Membrane</keyword>
<keyword id="KW-0519">Myristate</keyword>
<keyword id="KW-0539">Nucleus</keyword>
<keyword id="KW-0597">Phosphoprotein</keyword>
<keyword id="KW-1185">Reference proteome</keyword>
<keyword id="KW-0832">Ubl conjugation</keyword>
<accession>P61810</accession>
<accession>Q62938</accession>
<dbReference type="EMBL" id="U50707">
    <property type="protein sequence ID" value="AAC52611.1"/>
    <property type="molecule type" value="mRNA"/>
</dbReference>
<dbReference type="RefSeq" id="NP_446343.1">
    <property type="nucleotide sequence ID" value="NM_053891.2"/>
</dbReference>
<dbReference type="RefSeq" id="XP_063124375.1">
    <property type="nucleotide sequence ID" value="XM_063268305.1"/>
</dbReference>
<dbReference type="SMR" id="P61810"/>
<dbReference type="BioGRID" id="250555">
    <property type="interactions" value="4"/>
</dbReference>
<dbReference type="CORUM" id="P61810"/>
<dbReference type="DIP" id="DIP-29352N"/>
<dbReference type="FunCoup" id="P61810">
    <property type="interactions" value="2676"/>
</dbReference>
<dbReference type="IntAct" id="P61810">
    <property type="interactions" value="8"/>
</dbReference>
<dbReference type="MINT" id="P61810"/>
<dbReference type="STRING" id="10116.ENSRNOP00000062473"/>
<dbReference type="iPTMnet" id="P61810"/>
<dbReference type="PhosphoSitePlus" id="P61810"/>
<dbReference type="PaxDb" id="10116-ENSRNOP00000062473"/>
<dbReference type="Ensembl" id="ENSRNOT00000119428.1">
    <property type="protein sequence ID" value="ENSRNOP00000079807.1"/>
    <property type="gene ID" value="ENSRNOG00000068243.1"/>
</dbReference>
<dbReference type="GeneID" id="116671"/>
<dbReference type="KEGG" id="rno:116671"/>
<dbReference type="AGR" id="RGD:629472"/>
<dbReference type="CTD" id="8851"/>
<dbReference type="RGD" id="629472">
    <property type="gene designation" value="Cdk5r1"/>
</dbReference>
<dbReference type="eggNOG" id="KOG3932">
    <property type="taxonomic scope" value="Eukaryota"/>
</dbReference>
<dbReference type="GeneTree" id="ENSGT00390000008812"/>
<dbReference type="HOGENOM" id="CLU_034132_2_0_1"/>
<dbReference type="InParanoid" id="P61810"/>
<dbReference type="OMA" id="QHCNQNQ"/>
<dbReference type="OrthoDB" id="7676799at2759"/>
<dbReference type="PhylomeDB" id="P61810"/>
<dbReference type="TreeFam" id="TF101036"/>
<dbReference type="Reactome" id="R-RNO-399956">
    <property type="pathway name" value="CRMPs in Sema3A signaling"/>
</dbReference>
<dbReference type="Reactome" id="R-RNO-6804756">
    <property type="pathway name" value="Regulation of TP53 Activity through Phosphorylation"/>
</dbReference>
<dbReference type="PRO" id="PR:P61810"/>
<dbReference type="Proteomes" id="UP000002494">
    <property type="component" value="Chromosome 10"/>
</dbReference>
<dbReference type="Bgee" id="ENSRNOG00000021685">
    <property type="expression patterns" value="Expressed in frontal cortex and 14 other cell types or tissues"/>
</dbReference>
<dbReference type="GO" id="GO:0030424">
    <property type="term" value="C:axon"/>
    <property type="evidence" value="ECO:0000314"/>
    <property type="project" value="UniProtKB"/>
</dbReference>
<dbReference type="GO" id="GO:0043292">
    <property type="term" value="C:contractile muscle fiber"/>
    <property type="evidence" value="ECO:0000314"/>
    <property type="project" value="UniProtKB"/>
</dbReference>
<dbReference type="GO" id="GO:0000307">
    <property type="term" value="C:cyclin-dependent protein kinase holoenzyme complex"/>
    <property type="evidence" value="ECO:0000266"/>
    <property type="project" value="RGD"/>
</dbReference>
<dbReference type="GO" id="GO:0005737">
    <property type="term" value="C:cytoplasm"/>
    <property type="evidence" value="ECO:0000314"/>
    <property type="project" value="UniProtKB"/>
</dbReference>
<dbReference type="GO" id="GO:0030425">
    <property type="term" value="C:dendrite"/>
    <property type="evidence" value="ECO:0000314"/>
    <property type="project" value="UniProtKB"/>
</dbReference>
<dbReference type="GO" id="GO:0043197">
    <property type="term" value="C:dendritic spine"/>
    <property type="evidence" value="ECO:0000314"/>
    <property type="project" value="UniProtKB"/>
</dbReference>
<dbReference type="GO" id="GO:0030426">
    <property type="term" value="C:growth cone"/>
    <property type="evidence" value="ECO:0000314"/>
    <property type="project" value="UniProtKB"/>
</dbReference>
<dbReference type="GO" id="GO:0016020">
    <property type="term" value="C:membrane"/>
    <property type="evidence" value="ECO:0000314"/>
    <property type="project" value="UniProtKB"/>
</dbReference>
<dbReference type="GO" id="GO:0031594">
    <property type="term" value="C:neuromuscular junction"/>
    <property type="evidence" value="ECO:0000314"/>
    <property type="project" value="UniProtKB"/>
</dbReference>
<dbReference type="GO" id="GO:0043025">
    <property type="term" value="C:neuronal cell body"/>
    <property type="evidence" value="ECO:0000314"/>
    <property type="project" value="UniProtKB"/>
</dbReference>
<dbReference type="GO" id="GO:0005634">
    <property type="term" value="C:nucleus"/>
    <property type="evidence" value="ECO:0000314"/>
    <property type="project" value="UniProtKB"/>
</dbReference>
<dbReference type="GO" id="GO:0043204">
    <property type="term" value="C:perikaryon"/>
    <property type="evidence" value="ECO:0007669"/>
    <property type="project" value="UniProtKB-SubCell"/>
</dbReference>
<dbReference type="GO" id="GO:0048471">
    <property type="term" value="C:perinuclear region of cytoplasm"/>
    <property type="evidence" value="ECO:0000266"/>
    <property type="project" value="RGD"/>
</dbReference>
<dbReference type="GO" id="GO:0005886">
    <property type="term" value="C:plasma membrane"/>
    <property type="evidence" value="ECO:0000304"/>
    <property type="project" value="Reactome"/>
</dbReference>
<dbReference type="GO" id="GO:0014069">
    <property type="term" value="C:postsynaptic density"/>
    <property type="evidence" value="ECO:0000314"/>
    <property type="project" value="UniProtKB"/>
</dbReference>
<dbReference type="GO" id="GO:0098793">
    <property type="term" value="C:presynapse"/>
    <property type="evidence" value="ECO:0000314"/>
    <property type="project" value="SynGO"/>
</dbReference>
<dbReference type="GO" id="GO:0016533">
    <property type="term" value="C:protein kinase 5 complex"/>
    <property type="evidence" value="ECO:0000314"/>
    <property type="project" value="RGD"/>
</dbReference>
<dbReference type="GO" id="GO:0003779">
    <property type="term" value="F:actin binding"/>
    <property type="evidence" value="ECO:0000266"/>
    <property type="project" value="RGD"/>
</dbReference>
<dbReference type="GO" id="GO:0051015">
    <property type="term" value="F:actin filament binding"/>
    <property type="evidence" value="ECO:0000266"/>
    <property type="project" value="RGD"/>
</dbReference>
<dbReference type="GO" id="GO:0045296">
    <property type="term" value="F:cadherin binding"/>
    <property type="evidence" value="ECO:0000314"/>
    <property type="project" value="UniProtKB"/>
</dbReference>
<dbReference type="GO" id="GO:0005509">
    <property type="term" value="F:calcium ion binding"/>
    <property type="evidence" value="ECO:0000314"/>
    <property type="project" value="UniProtKB"/>
</dbReference>
<dbReference type="GO" id="GO:0061575">
    <property type="term" value="F:cyclin-dependent protein serine/threonine kinase activator activity"/>
    <property type="evidence" value="ECO:0000314"/>
    <property type="project" value="RGD"/>
</dbReference>
<dbReference type="GO" id="GO:0046875">
    <property type="term" value="F:ephrin receptor binding"/>
    <property type="evidence" value="ECO:0000353"/>
    <property type="project" value="UniProtKB"/>
</dbReference>
<dbReference type="GO" id="GO:0035255">
    <property type="term" value="F:ionotropic glutamate receptor binding"/>
    <property type="evidence" value="ECO:0000266"/>
    <property type="project" value="RGD"/>
</dbReference>
<dbReference type="GO" id="GO:0016301">
    <property type="term" value="F:kinase activity"/>
    <property type="evidence" value="ECO:0000314"/>
    <property type="project" value="UniProtKB"/>
</dbReference>
<dbReference type="GO" id="GO:0002020">
    <property type="term" value="F:protease binding"/>
    <property type="evidence" value="ECO:0000266"/>
    <property type="project" value="RGD"/>
</dbReference>
<dbReference type="GO" id="GO:0019901">
    <property type="term" value="F:protein kinase binding"/>
    <property type="evidence" value="ECO:0000353"/>
    <property type="project" value="RGD"/>
</dbReference>
<dbReference type="GO" id="GO:0043539">
    <property type="term" value="F:protein serine/threonine kinase activator activity"/>
    <property type="evidence" value="ECO:0000314"/>
    <property type="project" value="UniProtKB"/>
</dbReference>
<dbReference type="GO" id="GO:0048675">
    <property type="term" value="P:axon extension"/>
    <property type="evidence" value="ECO:0000304"/>
    <property type="project" value="UniProtKB"/>
</dbReference>
<dbReference type="GO" id="GO:0007411">
    <property type="term" value="P:axon guidance"/>
    <property type="evidence" value="ECO:0000250"/>
    <property type="project" value="UniProtKB"/>
</dbReference>
<dbReference type="GO" id="GO:0007413">
    <property type="term" value="P:axonal fasciculation"/>
    <property type="evidence" value="ECO:0000250"/>
    <property type="project" value="UniProtKB"/>
</dbReference>
<dbReference type="GO" id="GO:0007420">
    <property type="term" value="P:brain development"/>
    <property type="evidence" value="ECO:0000250"/>
    <property type="project" value="UniProtKB"/>
</dbReference>
<dbReference type="GO" id="GO:0021549">
    <property type="term" value="P:cerebellum development"/>
    <property type="evidence" value="ECO:0000266"/>
    <property type="project" value="RGD"/>
</dbReference>
<dbReference type="GO" id="GO:0021799">
    <property type="term" value="P:cerebral cortex radially oriented cell migration"/>
    <property type="evidence" value="ECO:0000266"/>
    <property type="project" value="RGD"/>
</dbReference>
<dbReference type="GO" id="GO:0009792">
    <property type="term" value="P:embryo development ending in birth or egg hatching"/>
    <property type="evidence" value="ECO:0000314"/>
    <property type="project" value="UniProtKB"/>
</dbReference>
<dbReference type="GO" id="GO:0048013">
    <property type="term" value="P:ephrin receptor signaling pathway"/>
    <property type="evidence" value="ECO:0000250"/>
    <property type="project" value="UniProtKB"/>
</dbReference>
<dbReference type="GO" id="GO:0007213">
    <property type="term" value="P:G protein-coupled acetylcholine receptor signaling pathway"/>
    <property type="evidence" value="ECO:0000314"/>
    <property type="project" value="UniProtKB"/>
</dbReference>
<dbReference type="GO" id="GO:0070315">
    <property type="term" value="P:G1 to G0 transition involved in cell differentiation"/>
    <property type="evidence" value="ECO:0000266"/>
    <property type="project" value="RGD"/>
</dbReference>
<dbReference type="GO" id="GO:0021766">
    <property type="term" value="P:hippocampus development"/>
    <property type="evidence" value="ECO:0000266"/>
    <property type="project" value="RGD"/>
</dbReference>
<dbReference type="GO" id="GO:0035235">
    <property type="term" value="P:ionotropic glutamate receptor signaling pathway"/>
    <property type="evidence" value="ECO:0000314"/>
    <property type="project" value="UniProtKB"/>
</dbReference>
<dbReference type="GO" id="GO:0021819">
    <property type="term" value="P:layer formation in cerebral cortex"/>
    <property type="evidence" value="ECO:0000266"/>
    <property type="project" value="RGD"/>
</dbReference>
<dbReference type="GO" id="GO:0045892">
    <property type="term" value="P:negative regulation of DNA-templated transcription"/>
    <property type="evidence" value="ECO:0000266"/>
    <property type="project" value="RGD"/>
</dbReference>
<dbReference type="GO" id="GO:0007158">
    <property type="term" value="P:neuron cell-cell adhesion"/>
    <property type="evidence" value="ECO:0000250"/>
    <property type="project" value="UniProtKB"/>
</dbReference>
<dbReference type="GO" id="GO:0030182">
    <property type="term" value="P:neuron differentiation"/>
    <property type="evidence" value="ECO:0000314"/>
    <property type="project" value="UniProtKB"/>
</dbReference>
<dbReference type="GO" id="GO:0001764">
    <property type="term" value="P:neuron migration"/>
    <property type="evidence" value="ECO:0000250"/>
    <property type="project" value="UniProtKB"/>
</dbReference>
<dbReference type="GO" id="GO:0031175">
    <property type="term" value="P:neuron projection development"/>
    <property type="evidence" value="ECO:0000315"/>
    <property type="project" value="UniProtKB"/>
</dbReference>
<dbReference type="GO" id="GO:0043525">
    <property type="term" value="P:positive regulation of neuron apoptotic process"/>
    <property type="evidence" value="ECO:0000314"/>
    <property type="project" value="UniProtKB"/>
</dbReference>
<dbReference type="GO" id="GO:0090314">
    <property type="term" value="P:positive regulation of protein targeting to membrane"/>
    <property type="evidence" value="ECO:0000266"/>
    <property type="project" value="RGD"/>
</dbReference>
<dbReference type="GO" id="GO:0032956">
    <property type="term" value="P:regulation of actin cytoskeleton organization"/>
    <property type="evidence" value="ECO:0000266"/>
    <property type="project" value="RGD"/>
</dbReference>
<dbReference type="GO" id="GO:0061001">
    <property type="term" value="P:regulation of dendritic spine morphogenesis"/>
    <property type="evidence" value="ECO:0000250"/>
    <property type="project" value="UniProtKB"/>
</dbReference>
<dbReference type="GO" id="GO:0070507">
    <property type="term" value="P:regulation of microtubule cytoskeleton organization"/>
    <property type="evidence" value="ECO:0000266"/>
    <property type="project" value="RGD"/>
</dbReference>
<dbReference type="GO" id="GO:0098693">
    <property type="term" value="P:regulation of synaptic vesicle cycle"/>
    <property type="evidence" value="ECO:0000314"/>
    <property type="project" value="SynGO"/>
</dbReference>
<dbReference type="GO" id="GO:0048511">
    <property type="term" value="P:rhythmic process"/>
    <property type="evidence" value="ECO:0007669"/>
    <property type="project" value="UniProtKB-KW"/>
</dbReference>
<dbReference type="GO" id="GO:0021722">
    <property type="term" value="P:superior olivary nucleus maturation"/>
    <property type="evidence" value="ECO:0000266"/>
    <property type="project" value="RGD"/>
</dbReference>
<dbReference type="FunFam" id="1.10.472.10:FF:000025">
    <property type="entry name" value="Cyclin-dependent kinase 5 activator"/>
    <property type="match status" value="1"/>
</dbReference>
<dbReference type="Gene3D" id="1.10.472.10">
    <property type="entry name" value="Cyclin-like"/>
    <property type="match status" value="1"/>
</dbReference>
<dbReference type="InterPro" id="IPR004944">
    <property type="entry name" value="CDK5_activator"/>
</dbReference>
<dbReference type="InterPro" id="IPR036915">
    <property type="entry name" value="Cyclin-like_sf"/>
</dbReference>
<dbReference type="PANTHER" id="PTHR23401">
    <property type="entry name" value="CYCLIN DEPENDANT KINASE-5 ACTIVATOR"/>
    <property type="match status" value="1"/>
</dbReference>
<dbReference type="PANTHER" id="PTHR23401:SF2">
    <property type="entry name" value="CYCLIN-DEPENDENT KINASE 5 ACTIVATOR 1"/>
    <property type="match status" value="1"/>
</dbReference>
<dbReference type="Pfam" id="PF03261">
    <property type="entry name" value="CDK5_activator"/>
    <property type="match status" value="1"/>
</dbReference>
<dbReference type="PIRSF" id="PIRSF009324">
    <property type="entry name" value="Cdk5_activator"/>
    <property type="match status" value="1"/>
</dbReference>
<dbReference type="SUPFAM" id="SSF47954">
    <property type="entry name" value="Cyclin-like"/>
    <property type="match status" value="1"/>
</dbReference>
<name>CD5R1_RAT</name>
<feature type="initiator methionine" description="Removed" evidence="2">
    <location>
        <position position="1"/>
    </location>
</feature>
<feature type="chain" id="PRO_0000004798" description="Cyclin-dependent kinase 5 activator 1, p35">
    <location>
        <begin position="2"/>
        <end position="307"/>
    </location>
</feature>
<feature type="chain" id="PRO_0000004799" description="Cyclin-dependent kinase 5 activator 1, p25">
    <location>
        <begin position="99"/>
        <end position="307"/>
    </location>
</feature>
<feature type="region of interest" description="Disordered" evidence="3">
    <location>
        <begin position="97"/>
        <end position="133"/>
    </location>
</feature>
<feature type="compositionally biased region" description="Pro residues" evidence="3">
    <location>
        <begin position="100"/>
        <end position="110"/>
    </location>
</feature>
<feature type="compositionally biased region" description="Polar residues" evidence="3">
    <location>
        <begin position="112"/>
        <end position="125"/>
    </location>
</feature>
<feature type="site" description="Cleavage; by calpain" evidence="4">
    <location>
        <begin position="98"/>
        <end position="99"/>
    </location>
</feature>
<feature type="modified residue" description="Phosphoserine; by CDK5" evidence="2">
    <location>
        <position position="8"/>
    </location>
</feature>
<feature type="modified residue" description="Phosphothreonine; by CDK5" evidence="2">
    <location>
        <position position="138"/>
    </location>
</feature>
<feature type="lipid moiety-binding region" description="N-myristoyl glycine" evidence="1">
    <location>
        <position position="2"/>
    </location>
</feature>
<feature type="mutagenesis site" description="Increased susceptibility to calpain cleavage." evidence="6">
    <original>T</original>
    <variation>A</variation>
    <location>
        <position position="138"/>
    </location>
</feature>
<feature type="mutagenesis site" description="Decreased susceptibility to calpain cleavage." evidence="6">
    <original>T</original>
    <variation>E</variation>
    <location>
        <position position="138"/>
    </location>
</feature>
<reference key="1">
    <citation type="journal article" date="1996" name="J. Biol. Chem.">
        <title>Phosphorylation of the high molecular weight neurofilament protein (NF-H) by Cdk5 and p35.</title>
        <authorList>
            <person name="Sun D."/>
            <person name="Leung C.L."/>
            <person name="Liem R.K.H."/>
        </authorList>
    </citation>
    <scope>NUCLEOTIDE SEQUENCE [MRNA]</scope>
    <source>
        <tissue>Brain</tissue>
    </source>
</reference>
<reference key="2">
    <citation type="journal article" date="2000" name="Biochem. Biophys. Res. Commun.">
        <title>Processing of cdk5 activator p35 to its truncated form (p25) by calpain in acutely injured neuronal cells.</title>
        <authorList>
            <person name="Nath R."/>
            <person name="Davis M."/>
            <person name="Probert A.W."/>
            <person name="Kupina N.C."/>
            <person name="Ren X."/>
            <person name="Schielke G.P."/>
            <person name="Wang K.K."/>
        </authorList>
    </citation>
    <scope>PROTEOLYTIC CLEAVAGE BY CALPAIN</scope>
</reference>
<reference key="3">
    <citation type="journal article" date="2004" name="J. Neurosci.">
        <title>p35/cyclin-dependent kinase 5 phosphorylation of ras guanine nucleotide releasing factor 2 (RasGRF2) mediates Rac-dependent extracellular signal-regulated kinase 1/2 activity, altering RasGRF2 and microtubule-associated protein 1b distribution in neurons.</title>
        <authorList>
            <person name="Kesavapany S."/>
            <person name="Amin N."/>
            <person name="Zheng Y.-L."/>
            <person name="Nijhara R."/>
            <person name="Jaffe H."/>
            <person name="Sihag R."/>
            <person name="Gutkind J.S."/>
            <person name="Takahashi S."/>
            <person name="Kulkarni A."/>
            <person name="Grant P."/>
            <person name="Pant H.C."/>
        </authorList>
    </citation>
    <scope>INTERACTION WITH RASGRF2</scope>
</reference>
<reference key="4">
    <citation type="journal article" date="2007" name="J. Biol. Chem.">
        <title>Suppression of calpain-dependent cleavage of the CDK5 activator p35 to p25 by site-specific phosphorylation.</title>
        <authorList>
            <person name="Kamei H."/>
            <person name="Saito T."/>
            <person name="Ozawa M."/>
            <person name="Fujita Y."/>
            <person name="Asada A."/>
            <person name="Bibb J.A."/>
            <person name="Saido T.C."/>
            <person name="Sorimachi H."/>
            <person name="Hisanaga S."/>
        </authorList>
    </citation>
    <scope>PHOSPHORYLATION AT SER-8 AND THR-138</scope>
    <scope>MUTAGENESIS OF THR-138</scope>
</reference>
<reference key="5">
    <citation type="journal article" date="2007" name="Nat. Neurosci.">
        <title>Cdk5 regulates EphA4-mediated dendritic spine retraction through an ephexin1-dependent mechanism.</title>
        <authorList>
            <person name="Fu W.Y."/>
            <person name="Chen Y."/>
            <person name="Sahin M."/>
            <person name="Zhao X.S."/>
            <person name="Shi L."/>
            <person name="Bikoff J.B."/>
            <person name="Lai K.O."/>
            <person name="Yung W.H."/>
            <person name="Fu A.K."/>
            <person name="Greenberg M.E."/>
            <person name="Ip N.Y."/>
        </authorList>
    </citation>
    <scope>INTERACTION WITH EPHA4</scope>
</reference>
<proteinExistence type="evidence at protein level"/>